<dbReference type="EMBL" id="CP000270">
    <property type="protein sequence ID" value="ABE32890.1"/>
    <property type="molecule type" value="Genomic_DNA"/>
</dbReference>
<dbReference type="RefSeq" id="WP_007180031.1">
    <property type="nucleotide sequence ID" value="NZ_CP008760.1"/>
</dbReference>
<dbReference type="SMR" id="Q13SP9"/>
<dbReference type="STRING" id="266265.Bxe_A0037"/>
<dbReference type="KEGG" id="bxb:DR64_2216"/>
<dbReference type="KEGG" id="bxe:Bxe_A0037"/>
<dbReference type="eggNOG" id="COG0712">
    <property type="taxonomic scope" value="Bacteria"/>
</dbReference>
<dbReference type="OrthoDB" id="9816221at2"/>
<dbReference type="Proteomes" id="UP000001817">
    <property type="component" value="Chromosome 1"/>
</dbReference>
<dbReference type="GO" id="GO:0005886">
    <property type="term" value="C:plasma membrane"/>
    <property type="evidence" value="ECO:0007669"/>
    <property type="project" value="UniProtKB-SubCell"/>
</dbReference>
<dbReference type="GO" id="GO:0045259">
    <property type="term" value="C:proton-transporting ATP synthase complex"/>
    <property type="evidence" value="ECO:0007669"/>
    <property type="project" value="UniProtKB-KW"/>
</dbReference>
<dbReference type="GO" id="GO:0046933">
    <property type="term" value="F:proton-transporting ATP synthase activity, rotational mechanism"/>
    <property type="evidence" value="ECO:0007669"/>
    <property type="project" value="UniProtKB-UniRule"/>
</dbReference>
<dbReference type="Gene3D" id="1.10.520.20">
    <property type="entry name" value="N-terminal domain of the delta subunit of the F1F0-ATP synthase"/>
    <property type="match status" value="1"/>
</dbReference>
<dbReference type="HAMAP" id="MF_01416">
    <property type="entry name" value="ATP_synth_delta_bact"/>
    <property type="match status" value="1"/>
</dbReference>
<dbReference type="InterPro" id="IPR026015">
    <property type="entry name" value="ATP_synth_OSCP/delta_N_sf"/>
</dbReference>
<dbReference type="InterPro" id="IPR000711">
    <property type="entry name" value="ATPase_OSCP/dsu"/>
</dbReference>
<dbReference type="NCBIfam" id="TIGR01145">
    <property type="entry name" value="ATP_synt_delta"/>
    <property type="match status" value="1"/>
</dbReference>
<dbReference type="NCBIfam" id="NF004402">
    <property type="entry name" value="PRK05758.2-2"/>
    <property type="match status" value="1"/>
</dbReference>
<dbReference type="PANTHER" id="PTHR11910">
    <property type="entry name" value="ATP SYNTHASE DELTA CHAIN"/>
    <property type="match status" value="1"/>
</dbReference>
<dbReference type="Pfam" id="PF00213">
    <property type="entry name" value="OSCP"/>
    <property type="match status" value="1"/>
</dbReference>
<dbReference type="PRINTS" id="PR00125">
    <property type="entry name" value="ATPASEDELTA"/>
</dbReference>
<dbReference type="SUPFAM" id="SSF47928">
    <property type="entry name" value="N-terminal domain of the delta subunit of the F1F0-ATP synthase"/>
    <property type="match status" value="1"/>
</dbReference>
<keyword id="KW-0066">ATP synthesis</keyword>
<keyword id="KW-0997">Cell inner membrane</keyword>
<keyword id="KW-1003">Cell membrane</keyword>
<keyword id="KW-0139">CF(1)</keyword>
<keyword id="KW-0375">Hydrogen ion transport</keyword>
<keyword id="KW-0406">Ion transport</keyword>
<keyword id="KW-0472">Membrane</keyword>
<keyword id="KW-1185">Reference proteome</keyword>
<keyword id="KW-0813">Transport</keyword>
<feature type="chain" id="PRO_1000184668" description="ATP synthase subunit delta">
    <location>
        <begin position="1"/>
        <end position="179"/>
    </location>
</feature>
<comment type="function">
    <text evidence="1">F(1)F(0) ATP synthase produces ATP from ADP in the presence of a proton or sodium gradient. F-type ATPases consist of two structural domains, F(1) containing the extramembraneous catalytic core and F(0) containing the membrane proton channel, linked together by a central stalk and a peripheral stalk. During catalysis, ATP synthesis in the catalytic domain of F(1) is coupled via a rotary mechanism of the central stalk subunits to proton translocation.</text>
</comment>
<comment type="function">
    <text evidence="1">This protein is part of the stalk that links CF(0) to CF(1). It either transmits conformational changes from CF(0) to CF(1) or is implicated in proton conduction.</text>
</comment>
<comment type="subunit">
    <text evidence="1">F-type ATPases have 2 components, F(1) - the catalytic core - and F(0) - the membrane proton channel. F(1) has five subunits: alpha(3), beta(3), gamma(1), delta(1), epsilon(1). F(0) has three main subunits: a(1), b(2) and c(10-14). The alpha and beta chains form an alternating ring which encloses part of the gamma chain. F(1) is attached to F(0) by a central stalk formed by the gamma and epsilon chains, while a peripheral stalk is formed by the delta and b chains.</text>
</comment>
<comment type="subcellular location">
    <subcellularLocation>
        <location evidence="1">Cell inner membrane</location>
        <topology evidence="1">Peripheral membrane protein</topology>
    </subcellularLocation>
</comment>
<comment type="similarity">
    <text evidence="1">Belongs to the ATPase delta chain family.</text>
</comment>
<protein>
    <recommendedName>
        <fullName evidence="1">ATP synthase subunit delta</fullName>
    </recommendedName>
    <alternativeName>
        <fullName evidence="1">ATP synthase F(1) sector subunit delta</fullName>
    </alternativeName>
    <alternativeName>
        <fullName evidence="1">F-type ATPase subunit delta</fullName>
        <shortName evidence="1">F-ATPase subunit delta</shortName>
    </alternativeName>
</protein>
<organism>
    <name type="scientific">Paraburkholderia xenovorans (strain LB400)</name>
    <dbReference type="NCBI Taxonomy" id="266265"/>
    <lineage>
        <taxon>Bacteria</taxon>
        <taxon>Pseudomonadati</taxon>
        <taxon>Pseudomonadota</taxon>
        <taxon>Betaproteobacteria</taxon>
        <taxon>Burkholderiales</taxon>
        <taxon>Burkholderiaceae</taxon>
        <taxon>Paraburkholderia</taxon>
    </lineage>
</organism>
<reference key="1">
    <citation type="journal article" date="2006" name="Proc. Natl. Acad. Sci. U.S.A.">
        <title>Burkholderia xenovorans LB400 harbors a multi-replicon, 9.73-Mbp genome shaped for versatility.</title>
        <authorList>
            <person name="Chain P.S.G."/>
            <person name="Denef V.J."/>
            <person name="Konstantinidis K.T."/>
            <person name="Vergez L.M."/>
            <person name="Agullo L."/>
            <person name="Reyes V.L."/>
            <person name="Hauser L."/>
            <person name="Cordova M."/>
            <person name="Gomez L."/>
            <person name="Gonzalez M."/>
            <person name="Land M."/>
            <person name="Lao V."/>
            <person name="Larimer F."/>
            <person name="LiPuma J.J."/>
            <person name="Mahenthiralingam E."/>
            <person name="Malfatti S.A."/>
            <person name="Marx C.J."/>
            <person name="Parnell J.J."/>
            <person name="Ramette A."/>
            <person name="Richardson P."/>
            <person name="Seeger M."/>
            <person name="Smith D."/>
            <person name="Spilker T."/>
            <person name="Sul W.J."/>
            <person name="Tsoi T.V."/>
            <person name="Ulrich L.E."/>
            <person name="Zhulin I.B."/>
            <person name="Tiedje J.M."/>
        </authorList>
    </citation>
    <scope>NUCLEOTIDE SEQUENCE [LARGE SCALE GENOMIC DNA]</scope>
    <source>
        <strain>LB400</strain>
    </source>
</reference>
<sequence>MAELATIARPYAEALFGVAEAGDIAAWSTLVQELAQVARLPEVLSIASSPKVSRAQVSELLLTAVKSPLKDNAQAKNLVQMLVDNHRLPLLPEIAVQFEELKNAREGAADVLIVSAFPLEGAQLNDLVASLERKFKRKLKPTVEVDSSLIGGVRVTVGDEVLDTSVRARLASMQTALTA</sequence>
<gene>
    <name evidence="1" type="primary">atpH</name>
    <name type="ordered locus">Bxeno_A4352</name>
    <name type="ORF">Bxe_A0037</name>
</gene>
<evidence type="ECO:0000255" key="1">
    <source>
        <dbReference type="HAMAP-Rule" id="MF_01416"/>
    </source>
</evidence>
<proteinExistence type="inferred from homology"/>
<name>ATPD_PARXL</name>
<accession>Q13SP9</accession>